<reference key="1">
    <citation type="journal article" date="2002" name="Nature">
        <title>The genome sequence of Schizosaccharomyces pombe.</title>
        <authorList>
            <person name="Wood V."/>
            <person name="Gwilliam R."/>
            <person name="Rajandream M.A."/>
            <person name="Lyne M.H."/>
            <person name="Lyne R."/>
            <person name="Stewart A."/>
            <person name="Sgouros J.G."/>
            <person name="Peat N."/>
            <person name="Hayles J."/>
            <person name="Baker S.G."/>
            <person name="Basham D."/>
            <person name="Bowman S."/>
            <person name="Brooks K."/>
            <person name="Brown D."/>
            <person name="Brown S."/>
            <person name="Chillingworth T."/>
            <person name="Churcher C.M."/>
            <person name="Collins M."/>
            <person name="Connor R."/>
            <person name="Cronin A."/>
            <person name="Davis P."/>
            <person name="Feltwell T."/>
            <person name="Fraser A."/>
            <person name="Gentles S."/>
            <person name="Goble A."/>
            <person name="Hamlin N."/>
            <person name="Harris D.E."/>
            <person name="Hidalgo J."/>
            <person name="Hodgson G."/>
            <person name="Holroyd S."/>
            <person name="Hornsby T."/>
            <person name="Howarth S."/>
            <person name="Huckle E.J."/>
            <person name="Hunt S."/>
            <person name="Jagels K."/>
            <person name="James K.D."/>
            <person name="Jones L."/>
            <person name="Jones M."/>
            <person name="Leather S."/>
            <person name="McDonald S."/>
            <person name="McLean J."/>
            <person name="Mooney P."/>
            <person name="Moule S."/>
            <person name="Mungall K.L."/>
            <person name="Murphy L.D."/>
            <person name="Niblett D."/>
            <person name="Odell C."/>
            <person name="Oliver K."/>
            <person name="O'Neil S."/>
            <person name="Pearson D."/>
            <person name="Quail M.A."/>
            <person name="Rabbinowitsch E."/>
            <person name="Rutherford K.M."/>
            <person name="Rutter S."/>
            <person name="Saunders D."/>
            <person name="Seeger K."/>
            <person name="Sharp S."/>
            <person name="Skelton J."/>
            <person name="Simmonds M.N."/>
            <person name="Squares R."/>
            <person name="Squares S."/>
            <person name="Stevens K."/>
            <person name="Taylor K."/>
            <person name="Taylor R.G."/>
            <person name="Tivey A."/>
            <person name="Walsh S.V."/>
            <person name="Warren T."/>
            <person name="Whitehead S."/>
            <person name="Woodward J.R."/>
            <person name="Volckaert G."/>
            <person name="Aert R."/>
            <person name="Robben J."/>
            <person name="Grymonprez B."/>
            <person name="Weltjens I."/>
            <person name="Vanstreels E."/>
            <person name="Rieger M."/>
            <person name="Schaefer M."/>
            <person name="Mueller-Auer S."/>
            <person name="Gabel C."/>
            <person name="Fuchs M."/>
            <person name="Duesterhoeft A."/>
            <person name="Fritzc C."/>
            <person name="Holzer E."/>
            <person name="Moestl D."/>
            <person name="Hilbert H."/>
            <person name="Borzym K."/>
            <person name="Langer I."/>
            <person name="Beck A."/>
            <person name="Lehrach H."/>
            <person name="Reinhardt R."/>
            <person name="Pohl T.M."/>
            <person name="Eger P."/>
            <person name="Zimmermann W."/>
            <person name="Wedler H."/>
            <person name="Wambutt R."/>
            <person name="Purnelle B."/>
            <person name="Goffeau A."/>
            <person name="Cadieu E."/>
            <person name="Dreano S."/>
            <person name="Gloux S."/>
            <person name="Lelaure V."/>
            <person name="Mottier S."/>
            <person name="Galibert F."/>
            <person name="Aves S.J."/>
            <person name="Xiang Z."/>
            <person name="Hunt C."/>
            <person name="Moore K."/>
            <person name="Hurst S.M."/>
            <person name="Lucas M."/>
            <person name="Rochet M."/>
            <person name="Gaillardin C."/>
            <person name="Tallada V.A."/>
            <person name="Garzon A."/>
            <person name="Thode G."/>
            <person name="Daga R.R."/>
            <person name="Cruzado L."/>
            <person name="Jimenez J."/>
            <person name="Sanchez M."/>
            <person name="del Rey F."/>
            <person name="Benito J."/>
            <person name="Dominguez A."/>
            <person name="Revuelta J.L."/>
            <person name="Moreno S."/>
            <person name="Armstrong J."/>
            <person name="Forsburg S.L."/>
            <person name="Cerutti L."/>
            <person name="Lowe T."/>
            <person name="McCombie W.R."/>
            <person name="Paulsen I."/>
            <person name="Potashkin J."/>
            <person name="Shpakovski G.V."/>
            <person name="Ussery D."/>
            <person name="Barrell B.G."/>
            <person name="Nurse P."/>
        </authorList>
    </citation>
    <scope>NUCLEOTIDE SEQUENCE [LARGE SCALE GENOMIC DNA]</scope>
    <source>
        <strain>972 / ATCC 24843</strain>
    </source>
</reference>
<reference key="2">
    <citation type="journal article" date="2006" name="Nat. Biotechnol.">
        <title>ORFeome cloning and global analysis of protein localization in the fission yeast Schizosaccharomyces pombe.</title>
        <authorList>
            <person name="Matsuyama A."/>
            <person name="Arai R."/>
            <person name="Yashiroda Y."/>
            <person name="Shirai A."/>
            <person name="Kamata A."/>
            <person name="Sekido S."/>
            <person name="Kobayashi Y."/>
            <person name="Hashimoto A."/>
            <person name="Hamamoto M."/>
            <person name="Hiraoka Y."/>
            <person name="Horinouchi S."/>
            <person name="Yoshida M."/>
        </authorList>
    </citation>
    <scope>SUBCELLULAR LOCATION [LARGE SCALE ANALYSIS]</scope>
</reference>
<organism>
    <name type="scientific">Schizosaccharomyces pombe (strain 972 / ATCC 24843)</name>
    <name type="common">Fission yeast</name>
    <dbReference type="NCBI Taxonomy" id="284812"/>
    <lineage>
        <taxon>Eukaryota</taxon>
        <taxon>Fungi</taxon>
        <taxon>Dikarya</taxon>
        <taxon>Ascomycota</taxon>
        <taxon>Taphrinomycotina</taxon>
        <taxon>Schizosaccharomycetes</taxon>
        <taxon>Schizosaccharomycetales</taxon>
        <taxon>Schizosaccharomycetaceae</taxon>
        <taxon>Schizosaccharomyces</taxon>
    </lineage>
</organism>
<gene>
    <name type="ORF">SPAC222.08c</name>
</gene>
<keyword id="KW-0963">Cytoplasm</keyword>
<keyword id="KW-0315">Glutamine amidotransferase</keyword>
<keyword id="KW-0378">Hydrolase</keyword>
<keyword id="KW-0456">Lyase</keyword>
<keyword id="KW-1185">Reference proteome</keyword>
<protein>
    <recommendedName>
        <fullName>Uncharacterized glutaminase C222.08c</fullName>
        <ecNumber>3.5.1.2</ecNumber>
    </recommendedName>
</protein>
<feature type="chain" id="PRO_0000316599" description="Uncharacterized glutaminase C222.08c">
    <location>
        <begin position="1"/>
        <end position="234"/>
    </location>
</feature>
<feature type="active site" description="Nucleophile" evidence="1">
    <location>
        <position position="101"/>
    </location>
</feature>
<feature type="active site" description="Charge relay system" evidence="1">
    <location>
        <position position="208"/>
    </location>
</feature>
<feature type="active site" description="Charge relay system" evidence="1">
    <location>
        <position position="210"/>
    </location>
</feature>
<feature type="binding site" evidence="1">
    <location>
        <begin position="68"/>
        <end position="70"/>
    </location>
    <ligand>
        <name>L-glutamine</name>
        <dbReference type="ChEBI" id="CHEBI:58359"/>
    </ligand>
</feature>
<feature type="binding site" evidence="1">
    <location>
        <position position="131"/>
    </location>
    <ligand>
        <name>L-glutamine</name>
        <dbReference type="ChEBI" id="CHEBI:58359"/>
    </ligand>
</feature>
<feature type="binding site" evidence="1">
    <location>
        <begin position="167"/>
        <end position="168"/>
    </location>
    <ligand>
        <name>L-glutamine</name>
        <dbReference type="ChEBI" id="CHEBI:58359"/>
    </ligand>
</feature>
<name>YFM8_SCHPO</name>
<sequence length="234" mass="25902">MSSASMFGSLKTNAVDESQLKARIGVLALQGAFIEHINIMNSIDGVISFPVKTAKDCENIDGLIIPGGESTTIGKLINIDEKLRDRLEHLVDQGLPIWGTCAGMILLSKKSRGGKFPDPYLLRAMDIEVTRNYFGPQTMSFTTDITVTESMQFEATEPLHSFSATFIRAPVASTILSDDINVLATIVHEGNKEIVAVEQGPFLGTSFHPELTADNRWHEWWVKERVLPLKEKKD</sequence>
<dbReference type="EC" id="3.5.1.2"/>
<dbReference type="EMBL" id="CU329670">
    <property type="protein sequence ID" value="CAB60700.1"/>
    <property type="molecule type" value="Genomic_DNA"/>
</dbReference>
<dbReference type="PIR" id="T50149">
    <property type="entry name" value="T50149"/>
</dbReference>
<dbReference type="SMR" id="Q9UTE4"/>
<dbReference type="BioGRID" id="277966">
    <property type="interactions" value="71"/>
</dbReference>
<dbReference type="FunCoup" id="Q9UTE4">
    <property type="interactions" value="112"/>
</dbReference>
<dbReference type="IntAct" id="Q9UTE4">
    <property type="interactions" value="1"/>
</dbReference>
<dbReference type="STRING" id="284812.Q9UTE4"/>
<dbReference type="iPTMnet" id="Q9UTE4"/>
<dbReference type="SwissPalm" id="Q9UTE4"/>
<dbReference type="PaxDb" id="4896-SPAC222.08c.1"/>
<dbReference type="EnsemblFungi" id="SPAC222.08c.1">
    <property type="protein sequence ID" value="SPAC222.08c.1:pep"/>
    <property type="gene ID" value="SPAC222.08c"/>
</dbReference>
<dbReference type="KEGG" id="spo:2541464"/>
<dbReference type="PomBase" id="SPAC222.08c"/>
<dbReference type="VEuPathDB" id="FungiDB:SPAC222.08c"/>
<dbReference type="eggNOG" id="KOG3210">
    <property type="taxonomic scope" value="Eukaryota"/>
</dbReference>
<dbReference type="HOGENOM" id="CLU_069674_0_0_1"/>
<dbReference type="InParanoid" id="Q9UTE4"/>
<dbReference type="OMA" id="GMIMLAD"/>
<dbReference type="PhylomeDB" id="Q9UTE4"/>
<dbReference type="PRO" id="PR:Q9UTE4"/>
<dbReference type="Proteomes" id="UP000002485">
    <property type="component" value="Chromosome I"/>
</dbReference>
<dbReference type="GO" id="GO:0005737">
    <property type="term" value="C:cytoplasm"/>
    <property type="evidence" value="ECO:0007005"/>
    <property type="project" value="PomBase"/>
</dbReference>
<dbReference type="GO" id="GO:0005829">
    <property type="term" value="C:cytosol"/>
    <property type="evidence" value="ECO:0000318"/>
    <property type="project" value="GO_Central"/>
</dbReference>
<dbReference type="GO" id="GO:1903600">
    <property type="term" value="C:glutaminase complex"/>
    <property type="evidence" value="ECO:0000318"/>
    <property type="project" value="GO_Central"/>
</dbReference>
<dbReference type="GO" id="GO:0004359">
    <property type="term" value="F:glutaminase activity"/>
    <property type="evidence" value="ECO:0007669"/>
    <property type="project" value="UniProtKB-EC"/>
</dbReference>
<dbReference type="GO" id="GO:0016829">
    <property type="term" value="F:lyase activity"/>
    <property type="evidence" value="ECO:0007669"/>
    <property type="project" value="UniProtKB-KW"/>
</dbReference>
<dbReference type="GO" id="GO:0036001">
    <property type="term" value="P:'de novo' pyridoxal 5'-phosphate biosynthetic process"/>
    <property type="evidence" value="ECO:0000266"/>
    <property type="project" value="PomBase"/>
</dbReference>
<dbReference type="GO" id="GO:0042823">
    <property type="term" value="P:pyridoxal phosphate biosynthetic process"/>
    <property type="evidence" value="ECO:0000318"/>
    <property type="project" value="GO_Central"/>
</dbReference>
<dbReference type="GO" id="GO:0008614">
    <property type="term" value="P:pyridoxine metabolic process"/>
    <property type="evidence" value="ECO:0000318"/>
    <property type="project" value="GO_Central"/>
</dbReference>
<dbReference type="CDD" id="cd01749">
    <property type="entry name" value="GATase1_PB"/>
    <property type="match status" value="1"/>
</dbReference>
<dbReference type="FunFam" id="3.40.50.880:FF:000077">
    <property type="entry name" value="Unplaced genomic scaffold supercont2.4, whole genome shotgun sequence"/>
    <property type="match status" value="1"/>
</dbReference>
<dbReference type="Gene3D" id="3.40.50.880">
    <property type="match status" value="1"/>
</dbReference>
<dbReference type="InterPro" id="IPR029062">
    <property type="entry name" value="Class_I_gatase-like"/>
</dbReference>
<dbReference type="InterPro" id="IPR002161">
    <property type="entry name" value="PdxT/SNO"/>
</dbReference>
<dbReference type="InterPro" id="IPR021196">
    <property type="entry name" value="PdxT/SNO_CS"/>
</dbReference>
<dbReference type="NCBIfam" id="TIGR03800">
    <property type="entry name" value="PLP_synth_Pdx2"/>
    <property type="match status" value="1"/>
</dbReference>
<dbReference type="PANTHER" id="PTHR31559">
    <property type="entry name" value="PYRIDOXAL 5'-PHOSPHATE SYNTHASE SUBUNIT SNO"/>
    <property type="match status" value="1"/>
</dbReference>
<dbReference type="PANTHER" id="PTHR31559:SF0">
    <property type="entry name" value="PYRIDOXAL 5'-PHOSPHATE SYNTHASE SUBUNIT SNO1-RELATED"/>
    <property type="match status" value="1"/>
</dbReference>
<dbReference type="Pfam" id="PF01174">
    <property type="entry name" value="SNO"/>
    <property type="match status" value="1"/>
</dbReference>
<dbReference type="PIRSF" id="PIRSF005639">
    <property type="entry name" value="Glut_amidoT_SNO"/>
    <property type="match status" value="1"/>
</dbReference>
<dbReference type="SUPFAM" id="SSF52317">
    <property type="entry name" value="Class I glutamine amidotransferase-like"/>
    <property type="match status" value="1"/>
</dbReference>
<dbReference type="PROSITE" id="PS01236">
    <property type="entry name" value="PDXT_SNO_1"/>
    <property type="match status" value="1"/>
</dbReference>
<dbReference type="PROSITE" id="PS51130">
    <property type="entry name" value="PDXT_SNO_2"/>
    <property type="match status" value="1"/>
</dbReference>
<proteinExistence type="inferred from homology"/>
<evidence type="ECO:0000250" key="1">
    <source>
        <dbReference type="UniProtKB" id="P37528"/>
    </source>
</evidence>
<evidence type="ECO:0000250" key="2">
    <source>
        <dbReference type="UniProtKB" id="Q8LAD0"/>
    </source>
</evidence>
<evidence type="ECO:0000269" key="3">
    <source>
    </source>
</evidence>
<evidence type="ECO:0000305" key="4"/>
<accession>Q9UTE4</accession>
<comment type="catalytic activity">
    <reaction evidence="2">
        <text>L-glutamine + H2O = L-glutamate + NH4(+)</text>
        <dbReference type="Rhea" id="RHEA:15889"/>
        <dbReference type="ChEBI" id="CHEBI:15377"/>
        <dbReference type="ChEBI" id="CHEBI:28938"/>
        <dbReference type="ChEBI" id="CHEBI:29985"/>
        <dbReference type="ChEBI" id="CHEBI:58359"/>
        <dbReference type="EC" id="3.5.1.2"/>
    </reaction>
</comment>
<comment type="subcellular location">
    <subcellularLocation>
        <location evidence="3">Cytoplasm</location>
    </subcellularLocation>
</comment>
<comment type="similarity">
    <text evidence="4">Belongs to the glutaminase PdxT/SNO family.</text>
</comment>